<keyword id="KW-0150">Chloroplast</keyword>
<keyword id="KW-0507">mRNA processing</keyword>
<keyword id="KW-0508">mRNA splicing</keyword>
<keyword id="KW-0934">Plastid</keyword>
<keyword id="KW-1185">Reference proteome</keyword>
<keyword id="KW-0677">Repeat</keyword>
<keyword id="KW-0809">Transit peptide</keyword>
<protein>
    <recommendedName>
        <fullName evidence="6">Pentatricopeptide repeat-containing protein OTP51, chloroplastic</fullName>
    </recommendedName>
    <alternativeName>
        <fullName evidence="5">Protein ORGANELLE TRANSCRIPT PROCESSING 51</fullName>
        <shortName evidence="5">OsOTP51</shortName>
    </alternativeName>
</protein>
<gene>
    <name evidence="5" type="primary">OTP51</name>
    <name evidence="8" type="ordered locus">Os02g0702000</name>
    <name evidence="6" type="ordered locus">LOC_Os02g47360</name>
    <name evidence="7" type="ORF">OJ1218_D07.6</name>
    <name evidence="9" type="ORF">OsJ_08060</name>
</gene>
<proteinExistence type="inferred from homology"/>
<evidence type="ECO:0000255" key="1"/>
<evidence type="ECO:0000255" key="2">
    <source>
        <dbReference type="PROSITE-ProRule" id="PRU00708"/>
    </source>
</evidence>
<evidence type="ECO:0000256" key="3">
    <source>
        <dbReference type="SAM" id="MobiDB-lite"/>
    </source>
</evidence>
<evidence type="ECO:0000269" key="4">
    <source>
    </source>
</evidence>
<evidence type="ECO:0000303" key="5">
    <source>
    </source>
</evidence>
<evidence type="ECO:0000305" key="6"/>
<evidence type="ECO:0000312" key="7">
    <source>
        <dbReference type="EMBL" id="BAD07548.1"/>
    </source>
</evidence>
<evidence type="ECO:0000312" key="8">
    <source>
        <dbReference type="EMBL" id="BAF09761.2"/>
    </source>
</evidence>
<evidence type="ECO:0000312" key="9">
    <source>
        <dbReference type="EMBL" id="EAZ24309.1"/>
    </source>
</evidence>
<feature type="transit peptide" description="Chloroplast" evidence="1">
    <location>
        <begin position="1"/>
        <end position="56"/>
    </location>
</feature>
<feature type="chain" id="PRO_0000433225" description="Pentatricopeptide repeat-containing protein OTP51, chloroplastic" evidence="1">
    <location>
        <begin position="57"/>
        <end position="790"/>
    </location>
</feature>
<feature type="repeat" description="PPR 1" evidence="2">
    <location>
        <begin position="182"/>
        <end position="216"/>
    </location>
</feature>
<feature type="repeat" description="PPR 2" evidence="2">
    <location>
        <begin position="217"/>
        <end position="254"/>
    </location>
</feature>
<feature type="repeat" description="PPR 3" evidence="2">
    <location>
        <begin position="256"/>
        <end position="296"/>
    </location>
</feature>
<feature type="repeat" description="PPR 4" evidence="2">
    <location>
        <begin position="299"/>
        <end position="333"/>
    </location>
</feature>
<feature type="repeat" description="PPR 5" evidence="2">
    <location>
        <begin position="334"/>
        <end position="368"/>
    </location>
</feature>
<feature type="repeat" description="PPR 6" evidence="2">
    <location>
        <begin position="369"/>
        <end position="403"/>
    </location>
</feature>
<feature type="repeat" description="PPR 7" evidence="2">
    <location>
        <begin position="404"/>
        <end position="438"/>
    </location>
</feature>
<feature type="repeat" description="PPR 8" evidence="2">
    <location>
        <begin position="439"/>
        <end position="469"/>
    </location>
</feature>
<feature type="repeat" description="PPR 9" evidence="2">
    <location>
        <begin position="473"/>
        <end position="507"/>
    </location>
</feature>
<feature type="repeat" description="PPR 10" evidence="2">
    <location>
        <begin position="509"/>
        <end position="543"/>
    </location>
</feature>
<feature type="region of interest" description="Disordered" evidence="3">
    <location>
        <begin position="762"/>
        <end position="790"/>
    </location>
</feature>
<feature type="compositionally biased region" description="Acidic residues" evidence="3">
    <location>
        <begin position="771"/>
        <end position="790"/>
    </location>
</feature>
<organism>
    <name type="scientific">Oryza sativa subsp. japonica</name>
    <name type="common">Rice</name>
    <dbReference type="NCBI Taxonomy" id="39947"/>
    <lineage>
        <taxon>Eukaryota</taxon>
        <taxon>Viridiplantae</taxon>
        <taxon>Streptophyta</taxon>
        <taxon>Embryophyta</taxon>
        <taxon>Tracheophyta</taxon>
        <taxon>Spermatophyta</taxon>
        <taxon>Magnoliopsida</taxon>
        <taxon>Liliopsida</taxon>
        <taxon>Poales</taxon>
        <taxon>Poaceae</taxon>
        <taxon>BOP clade</taxon>
        <taxon>Oryzoideae</taxon>
        <taxon>Oryzeae</taxon>
        <taxon>Oryzinae</taxon>
        <taxon>Oryza</taxon>
        <taxon>Oryza sativa</taxon>
    </lineage>
</organism>
<comment type="function">
    <text evidence="4">Promotes the splicing of group II introns in chloroplasts. Required for the splicing of intron 2 of plastid ycf3 transcripts, a factor required for the assembly of photosystem I (PSI). Involved in the splicing of atpF, ndhA, petB and rps16 chloroplastic transcripts. Required for the assembly of PSI.</text>
</comment>
<comment type="subcellular location">
    <subcellularLocation>
        <location evidence="1">Plastid</location>
        <location evidence="1">Chloroplast</location>
    </subcellularLocation>
</comment>
<comment type="disruption phenotype">
    <text evidence="4">Chlorophyll deficiency and seedling lethality when grown under normal light or low light.</text>
</comment>
<comment type="similarity">
    <text evidence="6">Belongs to the PPR family. P subfamily.</text>
</comment>
<accession>Q6ZHJ5</accession>
<accession>A0A0P0VNH6</accession>
<accession>Q0DYC7</accession>
<dbReference type="EMBL" id="JN613018">
    <property type="protein sequence ID" value="AEX88471.1"/>
    <property type="molecule type" value="Genomic_DNA"/>
</dbReference>
<dbReference type="EMBL" id="AP004052">
    <property type="protein sequence ID" value="BAD07548.1"/>
    <property type="molecule type" value="Genomic_DNA"/>
</dbReference>
<dbReference type="EMBL" id="AP008208">
    <property type="protein sequence ID" value="BAF09761.2"/>
    <property type="molecule type" value="Genomic_DNA"/>
</dbReference>
<dbReference type="EMBL" id="AP014958">
    <property type="protein sequence ID" value="BAS80476.1"/>
    <property type="molecule type" value="Genomic_DNA"/>
</dbReference>
<dbReference type="EMBL" id="CM000139">
    <property type="protein sequence ID" value="EAZ24309.1"/>
    <property type="molecule type" value="Genomic_DNA"/>
</dbReference>
<dbReference type="RefSeq" id="XP_015626611.1">
    <property type="nucleotide sequence ID" value="XM_015771125.1"/>
</dbReference>
<dbReference type="SMR" id="Q6ZHJ5"/>
<dbReference type="FunCoup" id="Q6ZHJ5">
    <property type="interactions" value="2396"/>
</dbReference>
<dbReference type="STRING" id="39947.Q6ZHJ5"/>
<dbReference type="PaxDb" id="39947-Q6ZHJ5"/>
<dbReference type="EnsemblPlants" id="Os02t0702000-01">
    <property type="protein sequence ID" value="Os02t0702000-01"/>
    <property type="gene ID" value="Os02g0702000"/>
</dbReference>
<dbReference type="Gramene" id="Os02t0702000-01">
    <property type="protein sequence ID" value="Os02t0702000-01"/>
    <property type="gene ID" value="Os02g0702000"/>
</dbReference>
<dbReference type="KEGG" id="dosa:Os02g0702000"/>
<dbReference type="eggNOG" id="KOG4197">
    <property type="taxonomic scope" value="Eukaryota"/>
</dbReference>
<dbReference type="HOGENOM" id="CLU_017335_0_0_1"/>
<dbReference type="InParanoid" id="Q6ZHJ5"/>
<dbReference type="OMA" id="MESYAQR"/>
<dbReference type="OrthoDB" id="2020589at2759"/>
<dbReference type="Proteomes" id="UP000000763">
    <property type="component" value="Chromosome 2"/>
</dbReference>
<dbReference type="Proteomes" id="UP000007752">
    <property type="component" value="Chromosome 2"/>
</dbReference>
<dbReference type="Proteomes" id="UP000059680">
    <property type="component" value="Chromosome 2"/>
</dbReference>
<dbReference type="GO" id="GO:0009507">
    <property type="term" value="C:chloroplast"/>
    <property type="evidence" value="ECO:0007669"/>
    <property type="project" value="UniProtKB-SubCell"/>
</dbReference>
<dbReference type="GO" id="GO:0004519">
    <property type="term" value="F:endonuclease activity"/>
    <property type="evidence" value="ECO:0007669"/>
    <property type="project" value="InterPro"/>
</dbReference>
<dbReference type="GO" id="GO:0000373">
    <property type="term" value="P:Group II intron splicing"/>
    <property type="evidence" value="ECO:0000315"/>
    <property type="project" value="UniProtKB"/>
</dbReference>
<dbReference type="GO" id="GO:0045292">
    <property type="term" value="P:mRNA cis splicing, via spliceosome"/>
    <property type="evidence" value="ECO:0000315"/>
    <property type="project" value="UniProtKB"/>
</dbReference>
<dbReference type="GO" id="GO:0048564">
    <property type="term" value="P:photosystem I assembly"/>
    <property type="evidence" value="ECO:0000315"/>
    <property type="project" value="UniProtKB"/>
</dbReference>
<dbReference type="FunFam" id="3.10.28.10:FF:000005">
    <property type="entry name" value="Pentatricopeptide repeat-containing protein At2g15820, chloroplastic"/>
    <property type="match status" value="1"/>
</dbReference>
<dbReference type="FunFam" id="1.25.40.10:FF:001739">
    <property type="entry name" value="Pentatricopeptide repeat-containing protein OTP51, chloroplastic"/>
    <property type="match status" value="1"/>
</dbReference>
<dbReference type="FunFam" id="1.25.40.10:FF:002500">
    <property type="entry name" value="Pentatricopeptide repeat-containing protein OTP51, chloroplastic"/>
    <property type="match status" value="1"/>
</dbReference>
<dbReference type="FunFam" id="1.25.40.10:FF:000296">
    <property type="entry name" value="Pentatricopeptide repeat-containing protein, chloroplastic"/>
    <property type="match status" value="1"/>
</dbReference>
<dbReference type="FunFam" id="3.10.28.10:FF:000003">
    <property type="entry name" value="Pentatricopeptide repeat-containing protein, chloroplastic"/>
    <property type="match status" value="1"/>
</dbReference>
<dbReference type="Gene3D" id="3.10.28.10">
    <property type="entry name" value="Homing endonucleases"/>
    <property type="match status" value="2"/>
</dbReference>
<dbReference type="Gene3D" id="1.25.40.10">
    <property type="entry name" value="Tetratricopeptide repeat domain"/>
    <property type="match status" value="3"/>
</dbReference>
<dbReference type="InterPro" id="IPR052500">
    <property type="entry name" value="Chloro/Mito_RNA_Process"/>
</dbReference>
<dbReference type="InterPro" id="IPR027434">
    <property type="entry name" value="Homing_endonucl"/>
</dbReference>
<dbReference type="InterPro" id="IPR004860">
    <property type="entry name" value="LAGLIDADG_dom"/>
</dbReference>
<dbReference type="InterPro" id="IPR002885">
    <property type="entry name" value="Pentatricopeptide_rpt"/>
</dbReference>
<dbReference type="InterPro" id="IPR011990">
    <property type="entry name" value="TPR-like_helical_dom_sf"/>
</dbReference>
<dbReference type="NCBIfam" id="TIGR00756">
    <property type="entry name" value="PPR"/>
    <property type="match status" value="4"/>
</dbReference>
<dbReference type="PANTHER" id="PTHR47539">
    <property type="entry name" value="PENTATRICOPEPTIDE REPEAT-CONTAINING PROTEIN OTP51, CHLOROPLASTIC"/>
    <property type="match status" value="1"/>
</dbReference>
<dbReference type="PANTHER" id="PTHR47539:SF1">
    <property type="entry name" value="PENTATRICOPEPTIDE REPEAT-CONTAINING PROTEIN OTP51, CHLOROPLASTIC"/>
    <property type="match status" value="1"/>
</dbReference>
<dbReference type="Pfam" id="PF03161">
    <property type="entry name" value="LAGLIDADG_2"/>
    <property type="match status" value="1"/>
</dbReference>
<dbReference type="Pfam" id="PF01535">
    <property type="entry name" value="PPR"/>
    <property type="match status" value="3"/>
</dbReference>
<dbReference type="Pfam" id="PF13812">
    <property type="entry name" value="PPR_3"/>
    <property type="match status" value="1"/>
</dbReference>
<dbReference type="SUPFAM" id="SSF81901">
    <property type="entry name" value="HCP-like"/>
    <property type="match status" value="1"/>
</dbReference>
<dbReference type="SUPFAM" id="SSF55608">
    <property type="entry name" value="Homing endonucleases"/>
    <property type="match status" value="1"/>
</dbReference>
<dbReference type="PROSITE" id="PS51375">
    <property type="entry name" value="PPR"/>
    <property type="match status" value="7"/>
</dbReference>
<sequence length="790" mass="90000">MATTSPCAAPSPSLRCPLALSHPFASPPPPPALRLAGPKLLPGRLAVSPPPGIPAVASALESLILDLDDDEEDEDEETEFGLFQGEAWAAADEREAVRSPELVVPELEELPEQWRRSRIAWLCKELPAYKHSTFTRILNAQRKWITQDDATYVAVHCLRIRNNDAAFRVYSWMVRQHWFRFNFALATRVADCLGRDGKVEKCREVFEAMVKQGRVPAESTFHILIVAYLSVPKGRCLEEACTIYNQMIQMGGYKPRLSLHNSLFRALVSKTGGTAKYNLKQAEFVYHNVVTTNLDVHKDVYAGLIWLHSYQDVIDRERIIALRKEMKQAGFDEGIDVLVSVMRAFSKEGNVAETEATWHNILQSGSDLPVQAYVCRMEAYARTGEPMKSLDMFKEMKDKNIPPNVASYHKIIEIMTKALEVDIVEQLMNEFIESDMKHLMPAFLDLMYMYMDLDMHEKLELTFLKCIARCRPNRILYTIYLESLVKVGNIEKAEEVFGEMHNNGMIGTNTKSCNIMLRGYLSAEDYQKAEKVYDMMSKKKYDVQADSLEKLQSGLLLNKKVIKPKTVSMKLDQEQREILIGLLLGGTRMESYAQRGVHIVHFQFQEDSNAHSVLRVHIHERFFEWLSSASRSFDDGSKIPYQFSTIPHQHFSFFVDQFFLKGQPVLPKLIHRWLTPRVLAYWFMFGGSKLPSGDIVLKLSGGNSEGVERIVNSLHTQSLTSKVKRKGRFFWIGFQGSNAESFWRIIEPHVLNNFASLVTQEGSSIGSDGTQDTDTDSDDDMQMSDTERDE</sequence>
<name>OTP51_ORYSJ</name>
<reference key="1">
    <citation type="journal article" date="2012" name="J. Integr. Plant Biol.">
        <title>A mutation of OSOTP 51 leads to impairment of photosystem I complex assembly and serious photo-damage in rice.</title>
        <authorList>
            <person name="Ye J.W."/>
            <person name="Gong Z.Y."/>
            <person name="Chen C.G."/>
            <person name="Mi H.L."/>
            <person name="Chen G.Y."/>
        </authorList>
    </citation>
    <scope>NUCLEOTIDE SEQUENCE [GENOMIC DNA]</scope>
    <scope>FUNCTION</scope>
    <scope>DISRUPTION PHENOTYPE</scope>
</reference>
<reference key="2">
    <citation type="journal article" date="2005" name="Nature">
        <title>The map-based sequence of the rice genome.</title>
        <authorList>
            <consortium name="International rice genome sequencing project (IRGSP)"/>
        </authorList>
    </citation>
    <scope>NUCLEOTIDE SEQUENCE [LARGE SCALE GENOMIC DNA]</scope>
    <source>
        <strain>cv. Nipponbare</strain>
    </source>
</reference>
<reference key="3">
    <citation type="journal article" date="2008" name="Nucleic Acids Res.">
        <title>The rice annotation project database (RAP-DB): 2008 update.</title>
        <authorList>
            <consortium name="The rice annotation project (RAP)"/>
        </authorList>
    </citation>
    <scope>GENOME REANNOTATION</scope>
    <source>
        <strain>cv. Nipponbare</strain>
    </source>
</reference>
<reference key="4">
    <citation type="journal article" date="2013" name="Rice">
        <title>Improvement of the Oryza sativa Nipponbare reference genome using next generation sequence and optical map data.</title>
        <authorList>
            <person name="Kawahara Y."/>
            <person name="de la Bastide M."/>
            <person name="Hamilton J.P."/>
            <person name="Kanamori H."/>
            <person name="McCombie W.R."/>
            <person name="Ouyang S."/>
            <person name="Schwartz D.C."/>
            <person name="Tanaka T."/>
            <person name="Wu J."/>
            <person name="Zhou S."/>
            <person name="Childs K.L."/>
            <person name="Davidson R.M."/>
            <person name="Lin H."/>
            <person name="Quesada-Ocampo L."/>
            <person name="Vaillancourt B."/>
            <person name="Sakai H."/>
            <person name="Lee S.S."/>
            <person name="Kim J."/>
            <person name="Numa H."/>
            <person name="Itoh T."/>
            <person name="Buell C.R."/>
            <person name="Matsumoto T."/>
        </authorList>
    </citation>
    <scope>GENOME REANNOTATION</scope>
    <source>
        <strain>cv. Nipponbare</strain>
    </source>
</reference>
<reference key="5">
    <citation type="journal article" date="2005" name="PLoS Biol.">
        <title>The genomes of Oryza sativa: a history of duplications.</title>
        <authorList>
            <person name="Yu J."/>
            <person name="Wang J."/>
            <person name="Lin W."/>
            <person name="Li S."/>
            <person name="Li H."/>
            <person name="Zhou J."/>
            <person name="Ni P."/>
            <person name="Dong W."/>
            <person name="Hu S."/>
            <person name="Zeng C."/>
            <person name="Zhang J."/>
            <person name="Zhang Y."/>
            <person name="Li R."/>
            <person name="Xu Z."/>
            <person name="Li S."/>
            <person name="Li X."/>
            <person name="Zheng H."/>
            <person name="Cong L."/>
            <person name="Lin L."/>
            <person name="Yin J."/>
            <person name="Geng J."/>
            <person name="Li G."/>
            <person name="Shi J."/>
            <person name="Liu J."/>
            <person name="Lv H."/>
            <person name="Li J."/>
            <person name="Wang J."/>
            <person name="Deng Y."/>
            <person name="Ran L."/>
            <person name="Shi X."/>
            <person name="Wang X."/>
            <person name="Wu Q."/>
            <person name="Li C."/>
            <person name="Ren X."/>
            <person name="Wang J."/>
            <person name="Wang X."/>
            <person name="Li D."/>
            <person name="Liu D."/>
            <person name="Zhang X."/>
            <person name="Ji Z."/>
            <person name="Zhao W."/>
            <person name="Sun Y."/>
            <person name="Zhang Z."/>
            <person name="Bao J."/>
            <person name="Han Y."/>
            <person name="Dong L."/>
            <person name="Ji J."/>
            <person name="Chen P."/>
            <person name="Wu S."/>
            <person name="Liu J."/>
            <person name="Xiao Y."/>
            <person name="Bu D."/>
            <person name="Tan J."/>
            <person name="Yang L."/>
            <person name="Ye C."/>
            <person name="Zhang J."/>
            <person name="Xu J."/>
            <person name="Zhou Y."/>
            <person name="Yu Y."/>
            <person name="Zhang B."/>
            <person name="Zhuang S."/>
            <person name="Wei H."/>
            <person name="Liu B."/>
            <person name="Lei M."/>
            <person name="Yu H."/>
            <person name="Li Y."/>
            <person name="Xu H."/>
            <person name="Wei S."/>
            <person name="He X."/>
            <person name="Fang L."/>
            <person name="Zhang Z."/>
            <person name="Zhang Y."/>
            <person name="Huang X."/>
            <person name="Su Z."/>
            <person name="Tong W."/>
            <person name="Li J."/>
            <person name="Tong Z."/>
            <person name="Li S."/>
            <person name="Ye J."/>
            <person name="Wang L."/>
            <person name="Fang L."/>
            <person name="Lei T."/>
            <person name="Chen C.-S."/>
            <person name="Chen H.-C."/>
            <person name="Xu Z."/>
            <person name="Li H."/>
            <person name="Huang H."/>
            <person name="Zhang F."/>
            <person name="Xu H."/>
            <person name="Li N."/>
            <person name="Zhao C."/>
            <person name="Li S."/>
            <person name="Dong L."/>
            <person name="Huang Y."/>
            <person name="Li L."/>
            <person name="Xi Y."/>
            <person name="Qi Q."/>
            <person name="Li W."/>
            <person name="Zhang B."/>
            <person name="Hu W."/>
            <person name="Zhang Y."/>
            <person name="Tian X."/>
            <person name="Jiao Y."/>
            <person name="Liang X."/>
            <person name="Jin J."/>
            <person name="Gao L."/>
            <person name="Zheng W."/>
            <person name="Hao B."/>
            <person name="Liu S.-M."/>
            <person name="Wang W."/>
            <person name="Yuan L."/>
            <person name="Cao M."/>
            <person name="McDermott J."/>
            <person name="Samudrala R."/>
            <person name="Wang J."/>
            <person name="Wong G.K.-S."/>
            <person name="Yang H."/>
        </authorList>
    </citation>
    <scope>NUCLEOTIDE SEQUENCE [LARGE SCALE GENOMIC DNA]</scope>
    <source>
        <strain>cv. Nipponbare</strain>
    </source>
</reference>